<evidence type="ECO:0000255" key="1">
    <source>
        <dbReference type="HAMAP-Rule" id="MF_00598"/>
    </source>
</evidence>
<reference key="1">
    <citation type="journal article" date="2006" name="Appl. Environ. Microbiol.">
        <title>Complete genome sequence of the marine, chemolithoautotrophic, ammonia-oxidizing bacterium Nitrosococcus oceani ATCC 19707.</title>
        <authorList>
            <person name="Klotz M.G."/>
            <person name="Arp D.J."/>
            <person name="Chain P.S.G."/>
            <person name="El-Sheikh A.F."/>
            <person name="Hauser L.J."/>
            <person name="Hommes N.G."/>
            <person name="Larimer F.W."/>
            <person name="Malfatti S.A."/>
            <person name="Norton J.M."/>
            <person name="Poret-Peterson A.T."/>
            <person name="Vergez L.M."/>
            <person name="Ward B.B."/>
        </authorList>
    </citation>
    <scope>NUCLEOTIDE SEQUENCE [LARGE SCALE GENOMIC DNA]</scope>
    <source>
        <strain>ATCC 19707 / BCRC 17464 / JCM 30415 / NCIMB 11848 / C-107</strain>
    </source>
</reference>
<keyword id="KW-1185">Reference proteome</keyword>
<gene>
    <name evidence="1" type="primary">smg</name>
    <name type="ordered locus">Noc_3011</name>
</gene>
<dbReference type="EMBL" id="CP000127">
    <property type="protein sequence ID" value="ABA59453.1"/>
    <property type="molecule type" value="Genomic_DNA"/>
</dbReference>
<dbReference type="RefSeq" id="WP_002813185.1">
    <property type="nucleotide sequence ID" value="NC_007484.1"/>
</dbReference>
<dbReference type="SMR" id="Q3J6U3"/>
<dbReference type="FunCoup" id="Q3J6U3">
    <property type="interactions" value="55"/>
</dbReference>
<dbReference type="STRING" id="323261.Noc_3011"/>
<dbReference type="KEGG" id="noc:Noc_3011"/>
<dbReference type="eggNOG" id="COG2922">
    <property type="taxonomic scope" value="Bacteria"/>
</dbReference>
<dbReference type="HOGENOM" id="CLU_133242_0_0_6"/>
<dbReference type="InParanoid" id="Q3J6U3"/>
<dbReference type="Proteomes" id="UP000006838">
    <property type="component" value="Chromosome"/>
</dbReference>
<dbReference type="HAMAP" id="MF_00598">
    <property type="entry name" value="Smg"/>
    <property type="match status" value="1"/>
</dbReference>
<dbReference type="InterPro" id="IPR007456">
    <property type="entry name" value="Smg"/>
</dbReference>
<dbReference type="NCBIfam" id="NF002897">
    <property type="entry name" value="PRK03430.1"/>
    <property type="match status" value="1"/>
</dbReference>
<dbReference type="PANTHER" id="PTHR38692">
    <property type="entry name" value="PROTEIN SMG"/>
    <property type="match status" value="1"/>
</dbReference>
<dbReference type="PANTHER" id="PTHR38692:SF1">
    <property type="entry name" value="PROTEIN SMG"/>
    <property type="match status" value="1"/>
</dbReference>
<dbReference type="Pfam" id="PF04361">
    <property type="entry name" value="DUF494"/>
    <property type="match status" value="1"/>
</dbReference>
<feature type="chain" id="PRO_1000025658" description="Protein Smg homolog">
    <location>
        <begin position="1"/>
        <end position="159"/>
    </location>
</feature>
<name>SMG_NITOC</name>
<sequence length="159" mass="18503">MKENVLDVLMYLFQNYMDSEVESQPTKESLEVELTEAGFHHAEIGKAFDWLEGLALLQQSEPRRFPVTNSSIRIFTLHEKEKLDTECRGFLLFLEQVGVLDSMTRELIIDRVMALEAEDFDLEHLKWVILMVLSHQPGQEAAYAWMEDLVFDEVSDLLH</sequence>
<proteinExistence type="inferred from homology"/>
<organism>
    <name type="scientific">Nitrosococcus oceani (strain ATCC 19707 / BCRC 17464 / JCM 30415 / NCIMB 11848 / C-107)</name>
    <dbReference type="NCBI Taxonomy" id="323261"/>
    <lineage>
        <taxon>Bacteria</taxon>
        <taxon>Pseudomonadati</taxon>
        <taxon>Pseudomonadota</taxon>
        <taxon>Gammaproteobacteria</taxon>
        <taxon>Chromatiales</taxon>
        <taxon>Chromatiaceae</taxon>
        <taxon>Nitrosococcus</taxon>
    </lineage>
</organism>
<comment type="similarity">
    <text evidence="1">Belongs to the Smg family.</text>
</comment>
<accession>Q3J6U3</accession>
<protein>
    <recommendedName>
        <fullName evidence="1">Protein Smg homolog</fullName>
    </recommendedName>
</protein>